<protein>
    <recommendedName>
        <fullName evidence="1">Succinylglutamate desuccinylase</fullName>
        <ecNumber evidence="1">3.5.1.96</ecNumber>
    </recommendedName>
</protein>
<keyword id="KW-0056">Arginine metabolism</keyword>
<keyword id="KW-0378">Hydrolase</keyword>
<keyword id="KW-0479">Metal-binding</keyword>
<keyword id="KW-0862">Zinc</keyword>
<reference key="1">
    <citation type="journal article" date="2008" name="J. Bacteriol.">
        <title>Insights into the environmental resistance gene pool from the genome sequence of the multidrug-resistant environmental isolate Escherichia coli SMS-3-5.</title>
        <authorList>
            <person name="Fricke W.F."/>
            <person name="Wright M.S."/>
            <person name="Lindell A.H."/>
            <person name="Harkins D.M."/>
            <person name="Baker-Austin C."/>
            <person name="Ravel J."/>
            <person name="Stepanauskas R."/>
        </authorList>
    </citation>
    <scope>NUCLEOTIDE SEQUENCE [LARGE SCALE GENOMIC DNA]</scope>
    <source>
        <strain>SMS-3-5 / SECEC</strain>
    </source>
</reference>
<evidence type="ECO:0000255" key="1">
    <source>
        <dbReference type="HAMAP-Rule" id="MF_00767"/>
    </source>
</evidence>
<name>ASTE_ECOSM</name>
<organism>
    <name type="scientific">Escherichia coli (strain SMS-3-5 / SECEC)</name>
    <dbReference type="NCBI Taxonomy" id="439855"/>
    <lineage>
        <taxon>Bacteria</taxon>
        <taxon>Pseudomonadati</taxon>
        <taxon>Pseudomonadota</taxon>
        <taxon>Gammaproteobacteria</taxon>
        <taxon>Enterobacterales</taxon>
        <taxon>Enterobacteriaceae</taxon>
        <taxon>Escherichia</taxon>
    </lineage>
</organism>
<feature type="chain" id="PRO_1000133633" description="Succinylglutamate desuccinylase">
    <location>
        <begin position="1"/>
        <end position="322"/>
    </location>
</feature>
<feature type="active site" evidence="1">
    <location>
        <position position="210"/>
    </location>
</feature>
<feature type="binding site" evidence="1">
    <location>
        <position position="53"/>
    </location>
    <ligand>
        <name>Zn(2+)</name>
        <dbReference type="ChEBI" id="CHEBI:29105"/>
    </ligand>
</feature>
<feature type="binding site" evidence="1">
    <location>
        <position position="56"/>
    </location>
    <ligand>
        <name>Zn(2+)</name>
        <dbReference type="ChEBI" id="CHEBI:29105"/>
    </ligand>
</feature>
<feature type="binding site" evidence="1">
    <location>
        <position position="147"/>
    </location>
    <ligand>
        <name>Zn(2+)</name>
        <dbReference type="ChEBI" id="CHEBI:29105"/>
    </ligand>
</feature>
<sequence>MDNFLALTLTGKKPVITEREINGVRWRWLGDGVLELTPLTPPQGALVISAGIHGNETAPVEMLDALLGAISHGEIPLRWRLLVILGNPPALKQGKRYCHSDMNRMFGGRWQLFAESGETCRARELEQCLEDFYDQGKESVRWHLDLHTAIRGSLHPQFGVLPQRDIPWDEKFLTWLGAAGLEALVFHQEPGGTFTHFSARHFGALACTLELGKALPFGQNDLRQFAVTASAIAALLSGESVGIVRTPPLRYRVVSQITRHSPSFEMHMANDTLNFMPFEKGTLLAQDGEERFTVTHDVEYVLFPNPLVALGLRAGLMLEKIS</sequence>
<proteinExistence type="inferred from homology"/>
<dbReference type="EC" id="3.5.1.96" evidence="1"/>
<dbReference type="EMBL" id="CP000970">
    <property type="protein sequence ID" value="ACB16910.1"/>
    <property type="molecule type" value="Genomic_DNA"/>
</dbReference>
<dbReference type="RefSeq" id="WP_000368502.1">
    <property type="nucleotide sequence ID" value="NC_010498.1"/>
</dbReference>
<dbReference type="SMR" id="B1LDY7"/>
<dbReference type="KEGG" id="ecm:EcSMS35_1447"/>
<dbReference type="HOGENOM" id="CLU_071608_0_0_6"/>
<dbReference type="UniPathway" id="UPA00185">
    <property type="reaction ID" value="UER00283"/>
</dbReference>
<dbReference type="Proteomes" id="UP000007011">
    <property type="component" value="Chromosome"/>
</dbReference>
<dbReference type="GO" id="GO:0016788">
    <property type="term" value="F:hydrolase activity, acting on ester bonds"/>
    <property type="evidence" value="ECO:0007669"/>
    <property type="project" value="UniProtKB-UniRule"/>
</dbReference>
<dbReference type="GO" id="GO:0009017">
    <property type="term" value="F:succinylglutamate desuccinylase activity"/>
    <property type="evidence" value="ECO:0007669"/>
    <property type="project" value="UniProtKB-EC"/>
</dbReference>
<dbReference type="GO" id="GO:0008270">
    <property type="term" value="F:zinc ion binding"/>
    <property type="evidence" value="ECO:0007669"/>
    <property type="project" value="UniProtKB-UniRule"/>
</dbReference>
<dbReference type="GO" id="GO:0019544">
    <property type="term" value="P:arginine catabolic process to glutamate"/>
    <property type="evidence" value="ECO:0007669"/>
    <property type="project" value="UniProtKB-UniRule"/>
</dbReference>
<dbReference type="GO" id="GO:0019545">
    <property type="term" value="P:arginine catabolic process to succinate"/>
    <property type="evidence" value="ECO:0007669"/>
    <property type="project" value="UniProtKB-UniRule"/>
</dbReference>
<dbReference type="CDD" id="cd03855">
    <property type="entry name" value="M14_ASTE"/>
    <property type="match status" value="1"/>
</dbReference>
<dbReference type="FunFam" id="3.40.630.10:FF:000017">
    <property type="entry name" value="Succinylglutamate desuccinylase"/>
    <property type="match status" value="1"/>
</dbReference>
<dbReference type="Gene3D" id="3.40.630.10">
    <property type="entry name" value="Zn peptidases"/>
    <property type="match status" value="1"/>
</dbReference>
<dbReference type="HAMAP" id="MF_00767">
    <property type="entry name" value="Arg_catab_AstE"/>
    <property type="match status" value="1"/>
</dbReference>
<dbReference type="InterPro" id="IPR050178">
    <property type="entry name" value="AspA/AstE_fam"/>
</dbReference>
<dbReference type="InterPro" id="IPR055438">
    <property type="entry name" value="AstE_AspA_cat"/>
</dbReference>
<dbReference type="InterPro" id="IPR007036">
    <property type="entry name" value="Aste_AspA_hybrid_dom"/>
</dbReference>
<dbReference type="InterPro" id="IPR016681">
    <property type="entry name" value="SuccinylGlu_desuccinylase"/>
</dbReference>
<dbReference type="NCBIfam" id="TIGR03242">
    <property type="entry name" value="arg_catab_astE"/>
    <property type="match status" value="1"/>
</dbReference>
<dbReference type="NCBIfam" id="NF003706">
    <property type="entry name" value="PRK05324.1"/>
    <property type="match status" value="1"/>
</dbReference>
<dbReference type="PANTHER" id="PTHR15162">
    <property type="entry name" value="ASPARTOACYLASE"/>
    <property type="match status" value="1"/>
</dbReference>
<dbReference type="PANTHER" id="PTHR15162:SF7">
    <property type="entry name" value="SUCCINYLGLUTAMATE DESUCCINYLASE"/>
    <property type="match status" value="1"/>
</dbReference>
<dbReference type="Pfam" id="PF24827">
    <property type="entry name" value="AstE_AspA_cat"/>
    <property type="match status" value="1"/>
</dbReference>
<dbReference type="Pfam" id="PF04952">
    <property type="entry name" value="AstE_AspA_hybrid"/>
    <property type="match status" value="1"/>
</dbReference>
<dbReference type="PIRSF" id="PIRSF017020">
    <property type="entry name" value="AstE"/>
    <property type="match status" value="1"/>
</dbReference>
<dbReference type="SUPFAM" id="SSF53187">
    <property type="entry name" value="Zn-dependent exopeptidases"/>
    <property type="match status" value="1"/>
</dbReference>
<accession>B1LDY7</accession>
<comment type="function">
    <text evidence="1">Transforms N(2)-succinylglutamate into succinate and glutamate.</text>
</comment>
<comment type="catalytic activity">
    <reaction evidence="1">
        <text>N-succinyl-L-glutamate + H2O = L-glutamate + succinate</text>
        <dbReference type="Rhea" id="RHEA:15169"/>
        <dbReference type="ChEBI" id="CHEBI:15377"/>
        <dbReference type="ChEBI" id="CHEBI:29985"/>
        <dbReference type="ChEBI" id="CHEBI:30031"/>
        <dbReference type="ChEBI" id="CHEBI:58763"/>
        <dbReference type="EC" id="3.5.1.96"/>
    </reaction>
</comment>
<comment type="cofactor">
    <cofactor evidence="1">
        <name>Zn(2+)</name>
        <dbReference type="ChEBI" id="CHEBI:29105"/>
    </cofactor>
    <text evidence="1">Binds 1 zinc ion per subunit.</text>
</comment>
<comment type="pathway">
    <text evidence="1">Amino-acid degradation; L-arginine degradation via AST pathway; L-glutamate and succinate from L-arginine: step 5/5.</text>
</comment>
<comment type="similarity">
    <text evidence="1">Belongs to the AspA/AstE family. Succinylglutamate desuccinylase subfamily.</text>
</comment>
<gene>
    <name evidence="1" type="primary">astE</name>
    <name type="ordered locus">EcSMS35_1447</name>
</gene>